<organism>
    <name type="scientific">Salmonella typhi</name>
    <dbReference type="NCBI Taxonomy" id="90370"/>
    <lineage>
        <taxon>Bacteria</taxon>
        <taxon>Pseudomonadati</taxon>
        <taxon>Pseudomonadota</taxon>
        <taxon>Gammaproteobacteria</taxon>
        <taxon>Enterobacterales</taxon>
        <taxon>Enterobacteriaceae</taxon>
        <taxon>Salmonella</taxon>
    </lineage>
</organism>
<sequence length="505" mass="57556">MSEQNAQGADEVVDLNNEMKARREKLAALREQGIPFPNDFRRDRTSDQLHAEFDAKEAEELEALNIEVSVAGRMMTRRIMGKASFVTLQDVGGRIQLYVARDDLPEGVYNEQFKKWDLGDILGAKGKLFKTKTGELSIHCTELRLLTKALRPLPDKFHGLQDQEARYRQRYLDLISNDESRNTFKTRSKILAGIRQFMVARGFMEVETPMMQVIPGGASARPFITHHNALDLDMYLRIAPELYLKRLVVGGFERVFEINRNFRNEGISVRHNPEFTMMELYMAYADYKDLIELTESLFRTLAQDVLGTTQVPYGDEVFDFGKPFEKLTMHEAIKKYRPETDMADLDNFDSAKAIAESIGIHVEKSWGLGRIVTEIFDEVAEAHLIQPTFITEYPAEVSPLARRNDVNPEITDRFEFFIGGREIGNGFSELNDAEDQAQRFLDQVNAKAAGDDEAMFYDEDYVTALEHGLPPTAGLGIGIDRMVMLFTNSHTIRDVILFPAMRPVK</sequence>
<feature type="initiator methionine" description="Removed" evidence="1">
    <location>
        <position position="1"/>
    </location>
</feature>
<feature type="chain" id="PRO_0000152625" description="Lysine--tRNA ligase">
    <location>
        <begin position="2"/>
        <end position="505"/>
    </location>
</feature>
<feature type="binding site" evidence="2">
    <location>
        <position position="415"/>
    </location>
    <ligand>
        <name>Mg(2+)</name>
        <dbReference type="ChEBI" id="CHEBI:18420"/>
        <label>1</label>
    </ligand>
</feature>
<feature type="binding site" evidence="2">
    <location>
        <position position="422"/>
    </location>
    <ligand>
        <name>Mg(2+)</name>
        <dbReference type="ChEBI" id="CHEBI:18420"/>
        <label>1</label>
    </ligand>
</feature>
<feature type="binding site" evidence="2">
    <location>
        <position position="422"/>
    </location>
    <ligand>
        <name>Mg(2+)</name>
        <dbReference type="ChEBI" id="CHEBI:18420"/>
        <label>2</label>
    </ligand>
</feature>
<reference key="1">
    <citation type="journal article" date="2001" name="Nature">
        <title>Complete genome sequence of a multiple drug resistant Salmonella enterica serovar Typhi CT18.</title>
        <authorList>
            <person name="Parkhill J."/>
            <person name="Dougan G."/>
            <person name="James K.D."/>
            <person name="Thomson N.R."/>
            <person name="Pickard D."/>
            <person name="Wain J."/>
            <person name="Churcher C.M."/>
            <person name="Mungall K.L."/>
            <person name="Bentley S.D."/>
            <person name="Holden M.T.G."/>
            <person name="Sebaihia M."/>
            <person name="Baker S."/>
            <person name="Basham D."/>
            <person name="Brooks K."/>
            <person name="Chillingworth T."/>
            <person name="Connerton P."/>
            <person name="Cronin A."/>
            <person name="Davis P."/>
            <person name="Davies R.M."/>
            <person name="Dowd L."/>
            <person name="White N."/>
            <person name="Farrar J."/>
            <person name="Feltwell T."/>
            <person name="Hamlin N."/>
            <person name="Haque A."/>
            <person name="Hien T.T."/>
            <person name="Holroyd S."/>
            <person name="Jagels K."/>
            <person name="Krogh A."/>
            <person name="Larsen T.S."/>
            <person name="Leather S."/>
            <person name="Moule S."/>
            <person name="O'Gaora P."/>
            <person name="Parry C."/>
            <person name="Quail M.A."/>
            <person name="Rutherford K.M."/>
            <person name="Simmonds M."/>
            <person name="Skelton J."/>
            <person name="Stevens K."/>
            <person name="Whitehead S."/>
            <person name="Barrell B.G."/>
        </authorList>
    </citation>
    <scope>NUCLEOTIDE SEQUENCE [LARGE SCALE GENOMIC DNA]</scope>
    <source>
        <strain>CT18</strain>
    </source>
</reference>
<reference key="2">
    <citation type="journal article" date="2003" name="J. Bacteriol.">
        <title>Comparative genomics of Salmonella enterica serovar Typhi strains Ty2 and CT18.</title>
        <authorList>
            <person name="Deng W."/>
            <person name="Liou S.-R."/>
            <person name="Plunkett G. III"/>
            <person name="Mayhew G.F."/>
            <person name="Rose D.J."/>
            <person name="Burland V."/>
            <person name="Kodoyianni V."/>
            <person name="Schwartz D.C."/>
            <person name="Blattner F.R."/>
        </authorList>
    </citation>
    <scope>NUCLEOTIDE SEQUENCE [LARGE SCALE GENOMIC DNA]</scope>
    <source>
        <strain>ATCC 700931 / Ty2</strain>
    </source>
</reference>
<gene>
    <name evidence="2" type="primary">lysS</name>
    <name type="ordered locus">STY3196</name>
    <name type="ordered locus">t2958</name>
</gene>
<name>SYK1_SALTI</name>
<dbReference type="EC" id="6.1.1.6" evidence="2"/>
<dbReference type="EMBL" id="AL513382">
    <property type="protein sequence ID" value="CAD02870.1"/>
    <property type="molecule type" value="Genomic_DNA"/>
</dbReference>
<dbReference type="EMBL" id="AE014613">
    <property type="protein sequence ID" value="AAO70510.1"/>
    <property type="molecule type" value="Genomic_DNA"/>
</dbReference>
<dbReference type="RefSeq" id="NP_457438.1">
    <property type="nucleotide sequence ID" value="NC_003198.1"/>
</dbReference>
<dbReference type="RefSeq" id="WP_000003338.1">
    <property type="nucleotide sequence ID" value="NZ_WSUR01000024.1"/>
</dbReference>
<dbReference type="SMR" id="Q8Z3X8"/>
<dbReference type="STRING" id="220341.gene:17587071"/>
<dbReference type="KEGG" id="stt:t2958"/>
<dbReference type="KEGG" id="sty:STY3196"/>
<dbReference type="PATRIC" id="fig|220341.7.peg.3254"/>
<dbReference type="eggNOG" id="COG1190">
    <property type="taxonomic scope" value="Bacteria"/>
</dbReference>
<dbReference type="HOGENOM" id="CLU_008255_6_0_6"/>
<dbReference type="OMA" id="DFRNEGM"/>
<dbReference type="Proteomes" id="UP000000541">
    <property type="component" value="Chromosome"/>
</dbReference>
<dbReference type="Proteomes" id="UP000002670">
    <property type="component" value="Chromosome"/>
</dbReference>
<dbReference type="GO" id="GO:0005829">
    <property type="term" value="C:cytosol"/>
    <property type="evidence" value="ECO:0007669"/>
    <property type="project" value="TreeGrafter"/>
</dbReference>
<dbReference type="GO" id="GO:0005524">
    <property type="term" value="F:ATP binding"/>
    <property type="evidence" value="ECO:0007669"/>
    <property type="project" value="UniProtKB-UniRule"/>
</dbReference>
<dbReference type="GO" id="GO:0004824">
    <property type="term" value="F:lysine-tRNA ligase activity"/>
    <property type="evidence" value="ECO:0007669"/>
    <property type="project" value="UniProtKB-UniRule"/>
</dbReference>
<dbReference type="GO" id="GO:0000287">
    <property type="term" value="F:magnesium ion binding"/>
    <property type="evidence" value="ECO:0007669"/>
    <property type="project" value="UniProtKB-UniRule"/>
</dbReference>
<dbReference type="GO" id="GO:0000049">
    <property type="term" value="F:tRNA binding"/>
    <property type="evidence" value="ECO:0007669"/>
    <property type="project" value="TreeGrafter"/>
</dbReference>
<dbReference type="GO" id="GO:0006430">
    <property type="term" value="P:lysyl-tRNA aminoacylation"/>
    <property type="evidence" value="ECO:0007669"/>
    <property type="project" value="UniProtKB-UniRule"/>
</dbReference>
<dbReference type="CDD" id="cd00775">
    <property type="entry name" value="LysRS_core"/>
    <property type="match status" value="1"/>
</dbReference>
<dbReference type="CDD" id="cd04322">
    <property type="entry name" value="LysRS_N"/>
    <property type="match status" value="1"/>
</dbReference>
<dbReference type="FunFam" id="2.40.50.140:FF:000024">
    <property type="entry name" value="Lysine--tRNA ligase"/>
    <property type="match status" value="1"/>
</dbReference>
<dbReference type="FunFam" id="3.30.930.10:FF:000001">
    <property type="entry name" value="Lysine--tRNA ligase"/>
    <property type="match status" value="1"/>
</dbReference>
<dbReference type="Gene3D" id="3.30.930.10">
    <property type="entry name" value="Bira Bifunctional Protein, Domain 2"/>
    <property type="match status" value="1"/>
</dbReference>
<dbReference type="Gene3D" id="2.40.50.140">
    <property type="entry name" value="Nucleic acid-binding proteins"/>
    <property type="match status" value="1"/>
</dbReference>
<dbReference type="HAMAP" id="MF_00252">
    <property type="entry name" value="Lys_tRNA_synth_class2"/>
    <property type="match status" value="1"/>
</dbReference>
<dbReference type="InterPro" id="IPR004364">
    <property type="entry name" value="Aa-tRNA-synt_II"/>
</dbReference>
<dbReference type="InterPro" id="IPR006195">
    <property type="entry name" value="aa-tRNA-synth_II"/>
</dbReference>
<dbReference type="InterPro" id="IPR045864">
    <property type="entry name" value="aa-tRNA-synth_II/BPL/LPL"/>
</dbReference>
<dbReference type="InterPro" id="IPR002313">
    <property type="entry name" value="Lys-tRNA-ligase_II"/>
</dbReference>
<dbReference type="InterPro" id="IPR034762">
    <property type="entry name" value="Lys-tRNA-ligase_II_bac/euk"/>
</dbReference>
<dbReference type="InterPro" id="IPR044136">
    <property type="entry name" value="Lys-tRNA-ligase_II_N"/>
</dbReference>
<dbReference type="InterPro" id="IPR018149">
    <property type="entry name" value="Lys-tRNA-synth_II_C"/>
</dbReference>
<dbReference type="InterPro" id="IPR012340">
    <property type="entry name" value="NA-bd_OB-fold"/>
</dbReference>
<dbReference type="InterPro" id="IPR004365">
    <property type="entry name" value="NA-bd_OB_tRNA"/>
</dbReference>
<dbReference type="NCBIfam" id="TIGR00499">
    <property type="entry name" value="lysS_bact"/>
    <property type="match status" value="1"/>
</dbReference>
<dbReference type="NCBIfam" id="NF001756">
    <property type="entry name" value="PRK00484.1"/>
    <property type="match status" value="1"/>
</dbReference>
<dbReference type="NCBIfam" id="NF009101">
    <property type="entry name" value="PRK12445.1"/>
    <property type="match status" value="1"/>
</dbReference>
<dbReference type="PANTHER" id="PTHR42918:SF15">
    <property type="entry name" value="LYSINE--TRNA LIGASE, CHLOROPLASTIC_MITOCHONDRIAL"/>
    <property type="match status" value="1"/>
</dbReference>
<dbReference type="PANTHER" id="PTHR42918">
    <property type="entry name" value="LYSYL-TRNA SYNTHETASE"/>
    <property type="match status" value="1"/>
</dbReference>
<dbReference type="Pfam" id="PF00152">
    <property type="entry name" value="tRNA-synt_2"/>
    <property type="match status" value="1"/>
</dbReference>
<dbReference type="Pfam" id="PF01336">
    <property type="entry name" value="tRNA_anti-codon"/>
    <property type="match status" value="1"/>
</dbReference>
<dbReference type="PIRSF" id="PIRSF039101">
    <property type="entry name" value="LysRS2"/>
    <property type="match status" value="1"/>
</dbReference>
<dbReference type="PRINTS" id="PR00982">
    <property type="entry name" value="TRNASYNTHLYS"/>
</dbReference>
<dbReference type="SUPFAM" id="SSF55681">
    <property type="entry name" value="Class II aaRS and biotin synthetases"/>
    <property type="match status" value="1"/>
</dbReference>
<dbReference type="SUPFAM" id="SSF50249">
    <property type="entry name" value="Nucleic acid-binding proteins"/>
    <property type="match status" value="1"/>
</dbReference>
<dbReference type="PROSITE" id="PS50862">
    <property type="entry name" value="AA_TRNA_LIGASE_II"/>
    <property type="match status" value="1"/>
</dbReference>
<protein>
    <recommendedName>
        <fullName evidence="2">Lysine--tRNA ligase</fullName>
        <ecNumber evidence="2">6.1.1.6</ecNumber>
    </recommendedName>
    <alternativeName>
        <fullName evidence="2">Lysyl-tRNA synthetase</fullName>
        <shortName evidence="2">LysRS</shortName>
    </alternativeName>
</protein>
<proteinExistence type="inferred from homology"/>
<accession>Q8Z3X8</accession>
<keyword id="KW-0030">Aminoacyl-tRNA synthetase</keyword>
<keyword id="KW-0067">ATP-binding</keyword>
<keyword id="KW-0963">Cytoplasm</keyword>
<keyword id="KW-0436">Ligase</keyword>
<keyword id="KW-0460">Magnesium</keyword>
<keyword id="KW-0479">Metal-binding</keyword>
<keyword id="KW-0547">Nucleotide-binding</keyword>
<keyword id="KW-0648">Protein biosynthesis</keyword>
<comment type="catalytic activity">
    <reaction evidence="2">
        <text>tRNA(Lys) + L-lysine + ATP = L-lysyl-tRNA(Lys) + AMP + diphosphate</text>
        <dbReference type="Rhea" id="RHEA:20792"/>
        <dbReference type="Rhea" id="RHEA-COMP:9696"/>
        <dbReference type="Rhea" id="RHEA-COMP:9697"/>
        <dbReference type="ChEBI" id="CHEBI:30616"/>
        <dbReference type="ChEBI" id="CHEBI:32551"/>
        <dbReference type="ChEBI" id="CHEBI:33019"/>
        <dbReference type="ChEBI" id="CHEBI:78442"/>
        <dbReference type="ChEBI" id="CHEBI:78529"/>
        <dbReference type="ChEBI" id="CHEBI:456215"/>
        <dbReference type="EC" id="6.1.1.6"/>
    </reaction>
</comment>
<comment type="cofactor">
    <cofactor evidence="2">
        <name>Mg(2+)</name>
        <dbReference type="ChEBI" id="CHEBI:18420"/>
    </cofactor>
    <text evidence="2">Binds 3 Mg(2+) ions per subunit.</text>
</comment>
<comment type="subunit">
    <text evidence="2">Homodimer.</text>
</comment>
<comment type="subcellular location">
    <subcellularLocation>
        <location evidence="2">Cytoplasm</location>
    </subcellularLocation>
</comment>
<comment type="similarity">
    <text evidence="2">Belongs to the class-II aminoacyl-tRNA synthetase family.</text>
</comment>
<evidence type="ECO:0000250" key="1"/>
<evidence type="ECO:0000255" key="2">
    <source>
        <dbReference type="HAMAP-Rule" id="MF_00252"/>
    </source>
</evidence>